<evidence type="ECO:0000305" key="1"/>
<keyword id="KW-1185">Reference proteome</keyword>
<gene>
    <name type="ordered locus">BU473</name>
</gene>
<sequence length="104" mass="12519">MTLEKIKKYLISKINIKFIEIYDDSQFHHYSKKGLTHLRIIIISDDFINQTLINRHRIIFSMLSKMIEKKIYSLTLNTYTLNEWKDKKLKKTSNVKCVKKNNIL</sequence>
<proteinExistence type="inferred from homology"/>
<protein>
    <recommendedName>
        <fullName>Uncharacterized protein BU473</fullName>
    </recommendedName>
</protein>
<organism>
    <name type="scientific">Buchnera aphidicola subsp. Acyrthosiphon pisum (strain APS)</name>
    <name type="common">Acyrthosiphon pisum symbiotic bacterium</name>
    <dbReference type="NCBI Taxonomy" id="107806"/>
    <lineage>
        <taxon>Bacteria</taxon>
        <taxon>Pseudomonadati</taxon>
        <taxon>Pseudomonadota</taxon>
        <taxon>Gammaproteobacteria</taxon>
        <taxon>Enterobacterales</taxon>
        <taxon>Erwiniaceae</taxon>
        <taxon>Buchnera</taxon>
    </lineage>
</organism>
<dbReference type="EMBL" id="BA000003">
    <property type="protein sequence ID" value="BAB13170.1"/>
    <property type="molecule type" value="Genomic_DNA"/>
</dbReference>
<dbReference type="RefSeq" id="NP_240284.1">
    <property type="nucleotide sequence ID" value="NC_002528.1"/>
</dbReference>
<dbReference type="RefSeq" id="WP_009874425.1">
    <property type="nucleotide sequence ID" value="NC_002528.1"/>
</dbReference>
<dbReference type="SMR" id="P57545"/>
<dbReference type="STRING" id="563178.BUAP5A_466"/>
<dbReference type="EnsemblBacteria" id="BAB13170">
    <property type="protein sequence ID" value="BAB13170"/>
    <property type="gene ID" value="BAB13170"/>
</dbReference>
<dbReference type="KEGG" id="buc:BU473"/>
<dbReference type="PATRIC" id="fig|107806.10.peg.482"/>
<dbReference type="eggNOG" id="COG0271">
    <property type="taxonomic scope" value="Bacteria"/>
</dbReference>
<dbReference type="HOGENOM" id="CLU_109462_3_1_6"/>
<dbReference type="BioCyc" id="BAPH107806:GBZJ-466-MONOMER"/>
<dbReference type="Proteomes" id="UP000001806">
    <property type="component" value="Chromosome"/>
</dbReference>
<dbReference type="Gene3D" id="3.30.300.90">
    <property type="entry name" value="BolA-like"/>
    <property type="match status" value="1"/>
</dbReference>
<dbReference type="InterPro" id="IPR002634">
    <property type="entry name" value="BolA"/>
</dbReference>
<dbReference type="InterPro" id="IPR036065">
    <property type="entry name" value="BolA-like_sf"/>
</dbReference>
<dbReference type="InterPro" id="IPR050961">
    <property type="entry name" value="BolA/IbaG_stress_morph_reg"/>
</dbReference>
<dbReference type="PANTHER" id="PTHR46229">
    <property type="entry name" value="BOLA TRANSCRIPTION REGULATOR"/>
    <property type="match status" value="1"/>
</dbReference>
<dbReference type="PANTHER" id="PTHR46229:SF2">
    <property type="entry name" value="BOLA-LIKE PROTEIN 1"/>
    <property type="match status" value="1"/>
</dbReference>
<dbReference type="Pfam" id="PF01722">
    <property type="entry name" value="BolA"/>
    <property type="match status" value="1"/>
</dbReference>
<dbReference type="PIRSF" id="PIRSF003113">
    <property type="entry name" value="BolA"/>
    <property type="match status" value="1"/>
</dbReference>
<dbReference type="SUPFAM" id="SSF82657">
    <property type="entry name" value="BolA-like"/>
    <property type="match status" value="1"/>
</dbReference>
<reference key="1">
    <citation type="journal article" date="2000" name="Nature">
        <title>Genome sequence of the endocellular bacterial symbiont of aphids Buchnera sp. APS.</title>
        <authorList>
            <person name="Shigenobu S."/>
            <person name="Watanabe H."/>
            <person name="Hattori M."/>
            <person name="Sakaki Y."/>
            <person name="Ishikawa H."/>
        </authorList>
    </citation>
    <scope>NUCLEOTIDE SEQUENCE [LARGE SCALE GENOMIC DNA]</scope>
    <source>
        <strain>APS</strain>
    </source>
</reference>
<feature type="chain" id="PRO_0000201227" description="Uncharacterized protein BU473">
    <location>
        <begin position="1"/>
        <end position="104"/>
    </location>
</feature>
<name>Y473_BUCAI</name>
<comment type="similarity">
    <text evidence="1">Belongs to the BolA/IbaG family.</text>
</comment>
<accession>P57545</accession>